<gene>
    <name evidence="1" type="primary">rimO</name>
    <name type="ordered locus">ECSE_0893</name>
</gene>
<organism>
    <name type="scientific">Escherichia coli (strain SE11)</name>
    <dbReference type="NCBI Taxonomy" id="409438"/>
    <lineage>
        <taxon>Bacteria</taxon>
        <taxon>Pseudomonadati</taxon>
        <taxon>Pseudomonadota</taxon>
        <taxon>Gammaproteobacteria</taxon>
        <taxon>Enterobacterales</taxon>
        <taxon>Enterobacteriaceae</taxon>
        <taxon>Escherichia</taxon>
    </lineage>
</organism>
<protein>
    <recommendedName>
        <fullName evidence="1">Ribosomal protein uS12 methylthiotransferase RimO</fullName>
        <shortName evidence="1">uS12 MTTase</shortName>
        <shortName evidence="1">uS12 methylthiotransferase</shortName>
        <ecNumber evidence="1">2.8.4.4</ecNumber>
    </recommendedName>
    <alternativeName>
        <fullName evidence="1">Ribosomal protein uS12 (aspartate-C(3))-methylthiotransferase</fullName>
    </alternativeName>
    <alternativeName>
        <fullName evidence="1">Ribosome maturation factor RimO</fullName>
    </alternativeName>
</protein>
<sequence length="441" mass="49582">MSKVTPQPKIGFVSLGCPKNLVDSERILTELRTEGYDVVPSYDDADMVIVNTCGFIDSAVQESLEAIGEALNENGKVIVTGCLGAKEDQIREVHPKVLEITGPHSYEQVLEHVHHYVPKPKHNPFLSLVPEQGVKLTPRHYAYLKISEGCNHRCTFCIIPSMRGDLVSRPIGEVLSEAKRLVDAGVKEILVISQDTSAYGVDVKHRTGFHNGEPVKTSMVSLCEQLSKLGIWTRLHYVYPYPHVDDVIPLMAEGKILPYLDIPLQHASPRILKLMKRPGSVDRQLARIKQWREICPELTLRSTFIVGFPGETEEDFQMLLDFLKEARLDRVGCFKYSPVEGADANALPDQVPEEVKEERWNRFMQLQQQISAERLQEKVGREILVIIDEVDEEGAIGRSMADAPEIDGAVYLNGETNVKPGDILRVKVEHADEYDLWGSRV</sequence>
<evidence type="ECO:0000255" key="1">
    <source>
        <dbReference type="HAMAP-Rule" id="MF_01865"/>
    </source>
</evidence>
<evidence type="ECO:0000255" key="2">
    <source>
        <dbReference type="PROSITE-ProRule" id="PRU01266"/>
    </source>
</evidence>
<keyword id="KW-0004">4Fe-4S</keyword>
<keyword id="KW-0963">Cytoplasm</keyword>
<keyword id="KW-0408">Iron</keyword>
<keyword id="KW-0411">Iron-sulfur</keyword>
<keyword id="KW-0479">Metal-binding</keyword>
<keyword id="KW-0949">S-adenosyl-L-methionine</keyword>
<keyword id="KW-0808">Transferase</keyword>
<reference key="1">
    <citation type="journal article" date="2008" name="DNA Res.">
        <title>Complete genome sequence and comparative analysis of the wild-type commensal Escherichia coli strain SE11 isolated from a healthy adult.</title>
        <authorList>
            <person name="Oshima K."/>
            <person name="Toh H."/>
            <person name="Ogura Y."/>
            <person name="Sasamoto H."/>
            <person name="Morita H."/>
            <person name="Park S.-H."/>
            <person name="Ooka T."/>
            <person name="Iyoda S."/>
            <person name="Taylor T.D."/>
            <person name="Hayashi T."/>
            <person name="Itoh K."/>
            <person name="Hattori M."/>
        </authorList>
    </citation>
    <scope>NUCLEOTIDE SEQUENCE [LARGE SCALE GENOMIC DNA]</scope>
    <source>
        <strain>SE11</strain>
    </source>
</reference>
<accession>B6I8F5</accession>
<feature type="chain" id="PRO_0000374819" description="Ribosomal protein uS12 methylthiotransferase RimO">
    <location>
        <begin position="1"/>
        <end position="441"/>
    </location>
</feature>
<feature type="domain" description="MTTase N-terminal" evidence="1">
    <location>
        <begin position="8"/>
        <end position="118"/>
    </location>
</feature>
<feature type="domain" description="Radical SAM core" evidence="2">
    <location>
        <begin position="136"/>
        <end position="373"/>
    </location>
</feature>
<feature type="domain" description="TRAM" evidence="1">
    <location>
        <begin position="376"/>
        <end position="441"/>
    </location>
</feature>
<feature type="binding site" evidence="1">
    <location>
        <position position="17"/>
    </location>
    <ligand>
        <name>[4Fe-4S] cluster</name>
        <dbReference type="ChEBI" id="CHEBI:49883"/>
        <label>1</label>
    </ligand>
</feature>
<feature type="binding site" evidence="1">
    <location>
        <position position="53"/>
    </location>
    <ligand>
        <name>[4Fe-4S] cluster</name>
        <dbReference type="ChEBI" id="CHEBI:49883"/>
        <label>1</label>
    </ligand>
</feature>
<feature type="binding site" evidence="1">
    <location>
        <position position="82"/>
    </location>
    <ligand>
        <name>[4Fe-4S] cluster</name>
        <dbReference type="ChEBI" id="CHEBI:49883"/>
        <label>1</label>
    </ligand>
</feature>
<feature type="binding site" evidence="1">
    <location>
        <position position="150"/>
    </location>
    <ligand>
        <name>[4Fe-4S] cluster</name>
        <dbReference type="ChEBI" id="CHEBI:49883"/>
        <label>2</label>
        <note>4Fe-4S-S-AdoMet</note>
    </ligand>
</feature>
<feature type="binding site" evidence="1">
    <location>
        <position position="154"/>
    </location>
    <ligand>
        <name>[4Fe-4S] cluster</name>
        <dbReference type="ChEBI" id="CHEBI:49883"/>
        <label>2</label>
        <note>4Fe-4S-S-AdoMet</note>
    </ligand>
</feature>
<feature type="binding site" evidence="1">
    <location>
        <position position="157"/>
    </location>
    <ligand>
        <name>[4Fe-4S] cluster</name>
        <dbReference type="ChEBI" id="CHEBI:49883"/>
        <label>2</label>
        <note>4Fe-4S-S-AdoMet</note>
    </ligand>
</feature>
<proteinExistence type="inferred from homology"/>
<dbReference type="EC" id="2.8.4.4" evidence="1"/>
<dbReference type="EMBL" id="AP009240">
    <property type="protein sequence ID" value="BAG76417.1"/>
    <property type="molecule type" value="Genomic_DNA"/>
</dbReference>
<dbReference type="RefSeq" id="WP_000049367.1">
    <property type="nucleotide sequence ID" value="NC_011415.1"/>
</dbReference>
<dbReference type="SMR" id="B6I8F5"/>
<dbReference type="GeneID" id="75204700"/>
<dbReference type="KEGG" id="ecy:ECSE_0893"/>
<dbReference type="HOGENOM" id="CLU_018697_0_0_6"/>
<dbReference type="Proteomes" id="UP000008199">
    <property type="component" value="Chromosome"/>
</dbReference>
<dbReference type="GO" id="GO:0005829">
    <property type="term" value="C:cytosol"/>
    <property type="evidence" value="ECO:0007669"/>
    <property type="project" value="TreeGrafter"/>
</dbReference>
<dbReference type="GO" id="GO:0051539">
    <property type="term" value="F:4 iron, 4 sulfur cluster binding"/>
    <property type="evidence" value="ECO:0007669"/>
    <property type="project" value="UniProtKB-UniRule"/>
</dbReference>
<dbReference type="GO" id="GO:0035599">
    <property type="term" value="F:aspartic acid methylthiotransferase activity"/>
    <property type="evidence" value="ECO:0007669"/>
    <property type="project" value="TreeGrafter"/>
</dbReference>
<dbReference type="GO" id="GO:0046872">
    <property type="term" value="F:metal ion binding"/>
    <property type="evidence" value="ECO:0007669"/>
    <property type="project" value="UniProtKB-KW"/>
</dbReference>
<dbReference type="GO" id="GO:0103039">
    <property type="term" value="F:protein methylthiotransferase activity"/>
    <property type="evidence" value="ECO:0007669"/>
    <property type="project" value="UniProtKB-EC"/>
</dbReference>
<dbReference type="GO" id="GO:0006400">
    <property type="term" value="P:tRNA modification"/>
    <property type="evidence" value="ECO:0007669"/>
    <property type="project" value="InterPro"/>
</dbReference>
<dbReference type="CDD" id="cd01335">
    <property type="entry name" value="Radical_SAM"/>
    <property type="match status" value="1"/>
</dbReference>
<dbReference type="FunFam" id="2.40.50.140:FF:000060">
    <property type="entry name" value="Ribosomal protein S12 methylthiotransferase RimO"/>
    <property type="match status" value="1"/>
</dbReference>
<dbReference type="FunFam" id="3.40.50.12160:FF:000002">
    <property type="entry name" value="Ribosomal protein S12 methylthiotransferase RimO"/>
    <property type="match status" value="1"/>
</dbReference>
<dbReference type="FunFam" id="3.80.30.20:FF:000001">
    <property type="entry name" value="tRNA-2-methylthio-N(6)-dimethylallyladenosine synthase 2"/>
    <property type="match status" value="1"/>
</dbReference>
<dbReference type="Gene3D" id="3.40.50.12160">
    <property type="entry name" value="Methylthiotransferase, N-terminal domain"/>
    <property type="match status" value="1"/>
</dbReference>
<dbReference type="Gene3D" id="2.40.50.140">
    <property type="entry name" value="Nucleic acid-binding proteins"/>
    <property type="match status" value="1"/>
</dbReference>
<dbReference type="Gene3D" id="3.80.30.20">
    <property type="entry name" value="tm_1862 like domain"/>
    <property type="match status" value="1"/>
</dbReference>
<dbReference type="HAMAP" id="MF_01865">
    <property type="entry name" value="MTTase_RimO"/>
    <property type="match status" value="1"/>
</dbReference>
<dbReference type="InterPro" id="IPR006638">
    <property type="entry name" value="Elp3/MiaA/NifB-like_rSAM"/>
</dbReference>
<dbReference type="InterPro" id="IPR005839">
    <property type="entry name" value="Methylthiotransferase"/>
</dbReference>
<dbReference type="InterPro" id="IPR020612">
    <property type="entry name" value="Methylthiotransferase_CS"/>
</dbReference>
<dbReference type="InterPro" id="IPR013848">
    <property type="entry name" value="Methylthiotransferase_N"/>
</dbReference>
<dbReference type="InterPro" id="IPR038135">
    <property type="entry name" value="Methylthiotransferase_N_sf"/>
</dbReference>
<dbReference type="InterPro" id="IPR012340">
    <property type="entry name" value="NA-bd_OB-fold"/>
</dbReference>
<dbReference type="InterPro" id="IPR005840">
    <property type="entry name" value="Ribosomal_uS12_MeSTrfase_RimO"/>
</dbReference>
<dbReference type="InterPro" id="IPR007197">
    <property type="entry name" value="rSAM"/>
</dbReference>
<dbReference type="InterPro" id="IPR023404">
    <property type="entry name" value="rSAM_horseshoe"/>
</dbReference>
<dbReference type="InterPro" id="IPR002792">
    <property type="entry name" value="TRAM_dom"/>
</dbReference>
<dbReference type="NCBIfam" id="TIGR01125">
    <property type="entry name" value="30S ribosomal protein S12 methylthiotransferase RimO"/>
    <property type="match status" value="1"/>
</dbReference>
<dbReference type="NCBIfam" id="TIGR00089">
    <property type="entry name" value="MiaB/RimO family radical SAM methylthiotransferase"/>
    <property type="match status" value="1"/>
</dbReference>
<dbReference type="PANTHER" id="PTHR43837">
    <property type="entry name" value="RIBOSOMAL PROTEIN S12 METHYLTHIOTRANSFERASE RIMO"/>
    <property type="match status" value="1"/>
</dbReference>
<dbReference type="PANTHER" id="PTHR43837:SF1">
    <property type="entry name" value="RIBOSOMAL PROTEIN US12 METHYLTHIOTRANSFERASE RIMO"/>
    <property type="match status" value="1"/>
</dbReference>
<dbReference type="Pfam" id="PF04055">
    <property type="entry name" value="Radical_SAM"/>
    <property type="match status" value="1"/>
</dbReference>
<dbReference type="Pfam" id="PF18693">
    <property type="entry name" value="TRAM_2"/>
    <property type="match status" value="1"/>
</dbReference>
<dbReference type="Pfam" id="PF00919">
    <property type="entry name" value="UPF0004"/>
    <property type="match status" value="1"/>
</dbReference>
<dbReference type="SFLD" id="SFLDG01082">
    <property type="entry name" value="B12-binding_domain_containing"/>
    <property type="match status" value="1"/>
</dbReference>
<dbReference type="SFLD" id="SFLDS00029">
    <property type="entry name" value="Radical_SAM"/>
    <property type="match status" value="1"/>
</dbReference>
<dbReference type="SFLD" id="SFLDF00274">
    <property type="entry name" value="ribosomal_protein_S12_methylth"/>
    <property type="match status" value="1"/>
</dbReference>
<dbReference type="SMART" id="SM00729">
    <property type="entry name" value="Elp3"/>
    <property type="match status" value="1"/>
</dbReference>
<dbReference type="SUPFAM" id="SSF102114">
    <property type="entry name" value="Radical SAM enzymes"/>
    <property type="match status" value="1"/>
</dbReference>
<dbReference type="PROSITE" id="PS51449">
    <property type="entry name" value="MTTASE_N"/>
    <property type="match status" value="1"/>
</dbReference>
<dbReference type="PROSITE" id="PS01278">
    <property type="entry name" value="MTTASE_RADICAL"/>
    <property type="match status" value="1"/>
</dbReference>
<dbReference type="PROSITE" id="PS51918">
    <property type="entry name" value="RADICAL_SAM"/>
    <property type="match status" value="1"/>
</dbReference>
<dbReference type="PROSITE" id="PS50926">
    <property type="entry name" value="TRAM"/>
    <property type="match status" value="1"/>
</dbReference>
<name>RIMO_ECOSE</name>
<comment type="function">
    <text evidence="1">Catalyzes the methylthiolation of an aspartic acid residue of ribosomal protein uS12.</text>
</comment>
<comment type="catalytic activity">
    <reaction evidence="1">
        <text>L-aspartate(89)-[ribosomal protein uS12]-hydrogen + (sulfur carrier)-SH + AH2 + 2 S-adenosyl-L-methionine = 3-methylsulfanyl-L-aspartate(89)-[ribosomal protein uS12]-hydrogen + (sulfur carrier)-H + 5'-deoxyadenosine + L-methionine + A + S-adenosyl-L-homocysteine + 2 H(+)</text>
        <dbReference type="Rhea" id="RHEA:37087"/>
        <dbReference type="Rhea" id="RHEA-COMP:10460"/>
        <dbReference type="Rhea" id="RHEA-COMP:10461"/>
        <dbReference type="Rhea" id="RHEA-COMP:14737"/>
        <dbReference type="Rhea" id="RHEA-COMP:14739"/>
        <dbReference type="ChEBI" id="CHEBI:13193"/>
        <dbReference type="ChEBI" id="CHEBI:15378"/>
        <dbReference type="ChEBI" id="CHEBI:17319"/>
        <dbReference type="ChEBI" id="CHEBI:17499"/>
        <dbReference type="ChEBI" id="CHEBI:29917"/>
        <dbReference type="ChEBI" id="CHEBI:29961"/>
        <dbReference type="ChEBI" id="CHEBI:57844"/>
        <dbReference type="ChEBI" id="CHEBI:57856"/>
        <dbReference type="ChEBI" id="CHEBI:59789"/>
        <dbReference type="ChEBI" id="CHEBI:64428"/>
        <dbReference type="ChEBI" id="CHEBI:73599"/>
        <dbReference type="EC" id="2.8.4.4"/>
    </reaction>
</comment>
<comment type="cofactor">
    <cofactor evidence="1">
        <name>[4Fe-4S] cluster</name>
        <dbReference type="ChEBI" id="CHEBI:49883"/>
    </cofactor>
    <text evidence="1">Binds 2 [4Fe-4S] clusters. One cluster is coordinated with 3 cysteines and an exchangeable S-adenosyl-L-methionine.</text>
</comment>
<comment type="subcellular location">
    <subcellularLocation>
        <location evidence="1">Cytoplasm</location>
    </subcellularLocation>
</comment>
<comment type="similarity">
    <text evidence="1">Belongs to the methylthiotransferase family. RimO subfamily.</text>
</comment>